<gene>
    <name evidence="1" type="primary">proS</name>
    <name type="ordered locus">MS53_0492</name>
</gene>
<organism>
    <name type="scientific">Mycoplasmopsis synoviae (strain 53)</name>
    <name type="common">Mycoplasma synoviae</name>
    <dbReference type="NCBI Taxonomy" id="262723"/>
    <lineage>
        <taxon>Bacteria</taxon>
        <taxon>Bacillati</taxon>
        <taxon>Mycoplasmatota</taxon>
        <taxon>Mycoplasmoidales</taxon>
        <taxon>Metamycoplasmataceae</taxon>
        <taxon>Mycoplasmopsis</taxon>
    </lineage>
</organism>
<keyword id="KW-0030">Aminoacyl-tRNA synthetase</keyword>
<keyword id="KW-0067">ATP-binding</keyword>
<keyword id="KW-0963">Cytoplasm</keyword>
<keyword id="KW-0436">Ligase</keyword>
<keyword id="KW-0547">Nucleotide-binding</keyword>
<keyword id="KW-0648">Protein biosynthesis</keyword>
<keyword id="KW-1185">Reference proteome</keyword>
<comment type="function">
    <text evidence="1">Catalyzes the attachment of proline to tRNA(Pro) in a two-step reaction: proline is first activated by ATP to form Pro-AMP and then transferred to the acceptor end of tRNA(Pro).</text>
</comment>
<comment type="catalytic activity">
    <reaction evidence="1">
        <text>tRNA(Pro) + L-proline + ATP = L-prolyl-tRNA(Pro) + AMP + diphosphate</text>
        <dbReference type="Rhea" id="RHEA:14305"/>
        <dbReference type="Rhea" id="RHEA-COMP:9700"/>
        <dbReference type="Rhea" id="RHEA-COMP:9702"/>
        <dbReference type="ChEBI" id="CHEBI:30616"/>
        <dbReference type="ChEBI" id="CHEBI:33019"/>
        <dbReference type="ChEBI" id="CHEBI:60039"/>
        <dbReference type="ChEBI" id="CHEBI:78442"/>
        <dbReference type="ChEBI" id="CHEBI:78532"/>
        <dbReference type="ChEBI" id="CHEBI:456215"/>
        <dbReference type="EC" id="6.1.1.15"/>
    </reaction>
</comment>
<comment type="subunit">
    <text evidence="1">Homodimer.</text>
</comment>
<comment type="subcellular location">
    <subcellularLocation>
        <location evidence="1">Cytoplasm</location>
    </subcellularLocation>
</comment>
<comment type="domain">
    <text evidence="1">Consists of three domains: the N-terminal catalytic domain, the anticodon-binding domain and the C-terminal extension.</text>
</comment>
<comment type="similarity">
    <text evidence="1">Belongs to the class-II aminoacyl-tRNA synthetase family. ProS type 3 subfamily.</text>
</comment>
<accession>Q4A5S0</accession>
<reference key="1">
    <citation type="journal article" date="2005" name="J. Bacteriol.">
        <title>Swine and poultry pathogens: the complete genome sequences of two strains of Mycoplasma hyopneumoniae and a strain of Mycoplasma synoviae.</title>
        <authorList>
            <person name="Vasconcelos A.T.R."/>
            <person name="Ferreira H.B."/>
            <person name="Bizarro C.V."/>
            <person name="Bonatto S.L."/>
            <person name="Carvalho M.O."/>
            <person name="Pinto P.M."/>
            <person name="Almeida D.F."/>
            <person name="Almeida L.G.P."/>
            <person name="Almeida R."/>
            <person name="Alves-Junior L."/>
            <person name="Assuncao E.N."/>
            <person name="Azevedo V.A.C."/>
            <person name="Bogo M.R."/>
            <person name="Brigido M.M."/>
            <person name="Brocchi M."/>
            <person name="Burity H.A."/>
            <person name="Camargo A.A."/>
            <person name="Camargo S.S."/>
            <person name="Carepo M.S."/>
            <person name="Carraro D.M."/>
            <person name="de Mattos Cascardo J.C."/>
            <person name="Castro L.A."/>
            <person name="Cavalcanti G."/>
            <person name="Chemale G."/>
            <person name="Collevatti R.G."/>
            <person name="Cunha C.W."/>
            <person name="Dallagiovanna B."/>
            <person name="Dambros B.P."/>
            <person name="Dellagostin O.A."/>
            <person name="Falcao C."/>
            <person name="Fantinatti-Garboggini F."/>
            <person name="Felipe M.S.S."/>
            <person name="Fiorentin L."/>
            <person name="Franco G.R."/>
            <person name="Freitas N.S.A."/>
            <person name="Frias D."/>
            <person name="Grangeiro T.B."/>
            <person name="Grisard E.C."/>
            <person name="Guimaraes C.T."/>
            <person name="Hungria M."/>
            <person name="Jardim S.N."/>
            <person name="Krieger M.A."/>
            <person name="Laurino J.P."/>
            <person name="Lima L.F.A."/>
            <person name="Lopes M.I."/>
            <person name="Loreto E.L.S."/>
            <person name="Madeira H.M.F."/>
            <person name="Manfio G.P."/>
            <person name="Maranhao A.Q."/>
            <person name="Martinkovics C.T."/>
            <person name="Medeiros S.R.B."/>
            <person name="Moreira M.A.M."/>
            <person name="Neiva M."/>
            <person name="Ramalho-Neto C.E."/>
            <person name="Nicolas M.F."/>
            <person name="Oliveira S.C."/>
            <person name="Paixao R.F.C."/>
            <person name="Pedrosa F.O."/>
            <person name="Pena S.D.J."/>
            <person name="Pereira M."/>
            <person name="Pereira-Ferrari L."/>
            <person name="Piffer I."/>
            <person name="Pinto L.S."/>
            <person name="Potrich D.P."/>
            <person name="Salim A.C.M."/>
            <person name="Santos F.R."/>
            <person name="Schmitt R."/>
            <person name="Schneider M.P.C."/>
            <person name="Schrank A."/>
            <person name="Schrank I.S."/>
            <person name="Schuck A.F."/>
            <person name="Seuanez H.N."/>
            <person name="Silva D.W."/>
            <person name="Silva R."/>
            <person name="Silva S.C."/>
            <person name="Soares C.M.A."/>
            <person name="Souza K.R.L."/>
            <person name="Souza R.C."/>
            <person name="Staats C.C."/>
            <person name="Steffens M.B.R."/>
            <person name="Teixeira S.M.R."/>
            <person name="Urmenyi T.P."/>
            <person name="Vainstein M.H."/>
            <person name="Zuccherato L.W."/>
            <person name="Simpson A.J.G."/>
            <person name="Zaha A."/>
        </authorList>
    </citation>
    <scope>NUCLEOTIDE SEQUENCE [LARGE SCALE GENOMIC DNA]</scope>
    <source>
        <strain>53</strain>
    </source>
</reference>
<feature type="chain" id="PRO_0000249141" description="Proline--tRNA ligase">
    <location>
        <begin position="1"/>
        <end position="482"/>
    </location>
</feature>
<protein>
    <recommendedName>
        <fullName evidence="1">Proline--tRNA ligase</fullName>
        <ecNumber evidence="1">6.1.1.15</ecNumber>
    </recommendedName>
    <alternativeName>
        <fullName evidence="1">Prolyl-tRNA synthetase</fullName>
        <shortName evidence="1">ProRS</shortName>
    </alternativeName>
</protein>
<evidence type="ECO:0000255" key="1">
    <source>
        <dbReference type="HAMAP-Rule" id="MF_01571"/>
    </source>
</evidence>
<proteinExistence type="inferred from homology"/>
<sequence>MKQLEKITPLEKDFAQWYTDVVTNGNLMNYGPAKGTIIYKPNSYGIWENIQKTLNEVFKKHGVENIYAPLFIPESLFKIEKEHVQGFNPELATVTQVGNKKLSEKLIVRPTSEVIFANLFKEDINSYNDLPKIYNQWANVVRWEKVTKPFLRTREFLWQEGHTSHSSAEEARSFTVKMIKEYEKFLKNYLAIPVVSGKKTCNEKFAGAVSTYTVEAMMKDGKALQTGTSHYLGQKFSRPYGISFKNKNNEEDFVYQTSWGVSTRLLGAIIMVHGDNRGVIIPPKIAPIKVDILEILADKNPEVSKVANKIYKELSKKLSVRLDASNKSPGFKASQSEIEGVPLRIEVGPRDLENNCVTFVRRDTLEKTKVDLENVKKEVNNYLKLIQNNLYQAAKQRLEENTVYAYNYEDFKKHIVDNKFVVVPFCCVTKKEIEIKEETGATPRCILKKVKPRGVKLECVCKSDGCCDDDKAIKYVVFARAY</sequence>
<name>SYP_MYCS5</name>
<dbReference type="EC" id="6.1.1.15" evidence="1"/>
<dbReference type="EMBL" id="AE017245">
    <property type="protein sequence ID" value="AAZ43901.1"/>
    <property type="molecule type" value="Genomic_DNA"/>
</dbReference>
<dbReference type="RefSeq" id="WP_011283630.1">
    <property type="nucleotide sequence ID" value="NC_007294.1"/>
</dbReference>
<dbReference type="SMR" id="Q4A5S0"/>
<dbReference type="STRING" id="262723.MS53_0492"/>
<dbReference type="KEGG" id="msy:MS53_0492"/>
<dbReference type="eggNOG" id="COG0441">
    <property type="taxonomic scope" value="Bacteria"/>
</dbReference>
<dbReference type="HOGENOM" id="CLU_001882_4_2_14"/>
<dbReference type="OrthoDB" id="9809052at2"/>
<dbReference type="Proteomes" id="UP000000549">
    <property type="component" value="Chromosome"/>
</dbReference>
<dbReference type="GO" id="GO:0017101">
    <property type="term" value="C:aminoacyl-tRNA synthetase multienzyme complex"/>
    <property type="evidence" value="ECO:0007669"/>
    <property type="project" value="TreeGrafter"/>
</dbReference>
<dbReference type="GO" id="GO:0005737">
    <property type="term" value="C:cytoplasm"/>
    <property type="evidence" value="ECO:0007669"/>
    <property type="project" value="UniProtKB-SubCell"/>
</dbReference>
<dbReference type="GO" id="GO:0005524">
    <property type="term" value="F:ATP binding"/>
    <property type="evidence" value="ECO:0007669"/>
    <property type="project" value="UniProtKB-UniRule"/>
</dbReference>
<dbReference type="GO" id="GO:0004827">
    <property type="term" value="F:proline-tRNA ligase activity"/>
    <property type="evidence" value="ECO:0007669"/>
    <property type="project" value="UniProtKB-UniRule"/>
</dbReference>
<dbReference type="GO" id="GO:0006433">
    <property type="term" value="P:prolyl-tRNA aminoacylation"/>
    <property type="evidence" value="ECO:0007669"/>
    <property type="project" value="UniProtKB-UniRule"/>
</dbReference>
<dbReference type="CDD" id="cd00778">
    <property type="entry name" value="ProRS_core_arch_euk"/>
    <property type="match status" value="1"/>
</dbReference>
<dbReference type="FunFam" id="3.30.930.10:FF:000037">
    <property type="entry name" value="Proline--tRNA ligase"/>
    <property type="match status" value="1"/>
</dbReference>
<dbReference type="Gene3D" id="3.40.50.800">
    <property type="entry name" value="Anticodon-binding domain"/>
    <property type="match status" value="1"/>
</dbReference>
<dbReference type="Gene3D" id="3.30.930.10">
    <property type="entry name" value="Bira Bifunctional Protein, Domain 2"/>
    <property type="match status" value="1"/>
</dbReference>
<dbReference type="Gene3D" id="3.30.110.30">
    <property type="entry name" value="C-terminal domain of ProRS"/>
    <property type="match status" value="1"/>
</dbReference>
<dbReference type="HAMAP" id="MF_01571">
    <property type="entry name" value="Pro_tRNA_synth_type3"/>
    <property type="match status" value="1"/>
</dbReference>
<dbReference type="InterPro" id="IPR002314">
    <property type="entry name" value="aa-tRNA-synt_IIb"/>
</dbReference>
<dbReference type="InterPro" id="IPR006195">
    <property type="entry name" value="aa-tRNA-synth_II"/>
</dbReference>
<dbReference type="InterPro" id="IPR045864">
    <property type="entry name" value="aa-tRNA-synth_II/BPL/LPL"/>
</dbReference>
<dbReference type="InterPro" id="IPR004154">
    <property type="entry name" value="Anticodon-bd"/>
</dbReference>
<dbReference type="InterPro" id="IPR036621">
    <property type="entry name" value="Anticodon-bd_dom_sf"/>
</dbReference>
<dbReference type="InterPro" id="IPR002316">
    <property type="entry name" value="Pro-tRNA-ligase_IIa"/>
</dbReference>
<dbReference type="InterPro" id="IPR004499">
    <property type="entry name" value="Pro-tRNA-ligase_IIa_arc-type"/>
</dbReference>
<dbReference type="InterPro" id="IPR016061">
    <property type="entry name" value="Pro-tRNA_ligase_II_C"/>
</dbReference>
<dbReference type="InterPro" id="IPR017449">
    <property type="entry name" value="Pro-tRNA_synth_II"/>
</dbReference>
<dbReference type="InterPro" id="IPR033721">
    <property type="entry name" value="ProRS_core_arch_euk"/>
</dbReference>
<dbReference type="NCBIfam" id="TIGR00408">
    <property type="entry name" value="proS_fam_I"/>
    <property type="match status" value="1"/>
</dbReference>
<dbReference type="PANTHER" id="PTHR43382:SF2">
    <property type="entry name" value="BIFUNCTIONAL GLUTAMATE_PROLINE--TRNA LIGASE"/>
    <property type="match status" value="1"/>
</dbReference>
<dbReference type="PANTHER" id="PTHR43382">
    <property type="entry name" value="PROLYL-TRNA SYNTHETASE"/>
    <property type="match status" value="1"/>
</dbReference>
<dbReference type="Pfam" id="PF03129">
    <property type="entry name" value="HGTP_anticodon"/>
    <property type="match status" value="1"/>
</dbReference>
<dbReference type="Pfam" id="PF09180">
    <property type="entry name" value="ProRS-C_1"/>
    <property type="match status" value="1"/>
</dbReference>
<dbReference type="Pfam" id="PF00587">
    <property type="entry name" value="tRNA-synt_2b"/>
    <property type="match status" value="1"/>
</dbReference>
<dbReference type="PRINTS" id="PR01046">
    <property type="entry name" value="TRNASYNTHPRO"/>
</dbReference>
<dbReference type="SMART" id="SM00946">
    <property type="entry name" value="ProRS-C_1"/>
    <property type="match status" value="1"/>
</dbReference>
<dbReference type="SUPFAM" id="SSF64586">
    <property type="entry name" value="C-terminal domain of ProRS"/>
    <property type="match status" value="1"/>
</dbReference>
<dbReference type="SUPFAM" id="SSF52954">
    <property type="entry name" value="Class II aaRS ABD-related"/>
    <property type="match status" value="1"/>
</dbReference>
<dbReference type="SUPFAM" id="SSF55681">
    <property type="entry name" value="Class II aaRS and biotin synthetases"/>
    <property type="match status" value="1"/>
</dbReference>
<dbReference type="PROSITE" id="PS50862">
    <property type="entry name" value="AA_TRNA_LIGASE_II"/>
    <property type="match status" value="1"/>
</dbReference>